<keyword id="KW-1003">Cell membrane</keyword>
<keyword id="KW-0325">Glycoprotein</keyword>
<keyword id="KW-0472">Membrane</keyword>
<keyword id="KW-1185">Reference proteome</keyword>
<keyword id="KW-0812">Transmembrane</keyword>
<keyword id="KW-1133">Transmembrane helix</keyword>
<organism>
    <name type="scientific">Aspergillus terreus (strain NIH 2624 / FGSC A1156)</name>
    <dbReference type="NCBI Taxonomy" id="341663"/>
    <lineage>
        <taxon>Eukaryota</taxon>
        <taxon>Fungi</taxon>
        <taxon>Dikarya</taxon>
        <taxon>Ascomycota</taxon>
        <taxon>Pezizomycotina</taxon>
        <taxon>Eurotiomycetes</taxon>
        <taxon>Eurotiomycetidae</taxon>
        <taxon>Eurotiales</taxon>
        <taxon>Aspergillaceae</taxon>
        <taxon>Aspergillus</taxon>
        <taxon>Aspergillus subgen. Circumdati</taxon>
    </lineage>
</organism>
<dbReference type="EMBL" id="CH476597">
    <property type="protein sequence ID" value="EAU36749.1"/>
    <property type="molecule type" value="Genomic_DNA"/>
</dbReference>
<dbReference type="RefSeq" id="XP_001212653.1">
    <property type="nucleotide sequence ID" value="XM_001212653.1"/>
</dbReference>
<dbReference type="SMR" id="Q0CS59"/>
<dbReference type="STRING" id="341663.Q0CS59"/>
<dbReference type="GlyCosmos" id="Q0CS59">
    <property type="glycosylation" value="1 site, No reported glycans"/>
</dbReference>
<dbReference type="EnsemblFungi" id="EAU36749">
    <property type="protein sequence ID" value="EAU36749"/>
    <property type="gene ID" value="ATEG_03475"/>
</dbReference>
<dbReference type="GeneID" id="4317583"/>
<dbReference type="VEuPathDB" id="FungiDB:ATEG_03475"/>
<dbReference type="eggNOG" id="KOG0254">
    <property type="taxonomic scope" value="Eukaryota"/>
</dbReference>
<dbReference type="HOGENOM" id="CLU_000960_22_1_1"/>
<dbReference type="OMA" id="GHEKWIG"/>
<dbReference type="OrthoDB" id="10021397at2759"/>
<dbReference type="Proteomes" id="UP000007963">
    <property type="component" value="Unassembled WGS sequence"/>
</dbReference>
<dbReference type="GO" id="GO:0005886">
    <property type="term" value="C:plasma membrane"/>
    <property type="evidence" value="ECO:0007669"/>
    <property type="project" value="UniProtKB-SubCell"/>
</dbReference>
<dbReference type="GO" id="GO:0022857">
    <property type="term" value="F:transmembrane transporter activity"/>
    <property type="evidence" value="ECO:0007669"/>
    <property type="project" value="TreeGrafter"/>
</dbReference>
<dbReference type="FunFam" id="1.20.1250.20:FF:000196">
    <property type="entry name" value="MFS toxin efflux pump (AflT)"/>
    <property type="match status" value="1"/>
</dbReference>
<dbReference type="Gene3D" id="1.20.1250.20">
    <property type="entry name" value="MFS general substrate transporter like domains"/>
    <property type="match status" value="1"/>
</dbReference>
<dbReference type="InterPro" id="IPR036259">
    <property type="entry name" value="MFS_trans_sf"/>
</dbReference>
<dbReference type="PANTHER" id="PTHR23501:SF198">
    <property type="entry name" value="AZOLE RESISTANCE PROTEIN 1-RELATED"/>
    <property type="match status" value="1"/>
</dbReference>
<dbReference type="PANTHER" id="PTHR23501">
    <property type="entry name" value="MAJOR FACILITATOR SUPERFAMILY"/>
    <property type="match status" value="1"/>
</dbReference>
<dbReference type="SUPFAM" id="SSF103473">
    <property type="entry name" value="MFS general substrate transporter"/>
    <property type="match status" value="1"/>
</dbReference>
<proteinExistence type="inferred from homology"/>
<gene>
    <name evidence="4" type="primary">ataA</name>
    <name type="ORF">ATEG_03475</name>
</gene>
<protein>
    <recommendedName>
        <fullName evidence="4">MFS acetylaranotin efflux transporter ataA</fullName>
    </recommendedName>
    <alternativeName>
        <fullName evidence="4">Acetylaranotin biosynthesis cluster protein A</fullName>
    </alternativeName>
</protein>
<accession>Q0CS59</accession>
<name>ATAA_ASPTN</name>
<feature type="chain" id="PRO_0000440662" description="MFS acetylaranotin efflux transporter ataA">
    <location>
        <begin position="1"/>
        <end position="449"/>
    </location>
</feature>
<feature type="transmembrane region" description="Helical" evidence="1">
    <location>
        <begin position="6"/>
        <end position="26"/>
    </location>
</feature>
<feature type="transmembrane region" description="Helical" evidence="1">
    <location>
        <begin position="45"/>
        <end position="65"/>
    </location>
</feature>
<feature type="transmembrane region" description="Helical" evidence="1">
    <location>
        <begin position="67"/>
        <end position="87"/>
    </location>
</feature>
<feature type="transmembrane region" description="Helical" evidence="1">
    <location>
        <begin position="115"/>
        <end position="135"/>
    </location>
</feature>
<feature type="transmembrane region" description="Helical" evidence="1">
    <location>
        <begin position="155"/>
        <end position="175"/>
    </location>
</feature>
<feature type="transmembrane region" description="Helical" evidence="1">
    <location>
        <begin position="182"/>
        <end position="202"/>
    </location>
</feature>
<feature type="transmembrane region" description="Helical" evidence="1">
    <location>
        <begin position="227"/>
        <end position="247"/>
    </location>
</feature>
<feature type="transmembrane region" description="Helical" evidence="1">
    <location>
        <begin position="260"/>
        <end position="280"/>
    </location>
</feature>
<feature type="transmembrane region" description="Helical" evidence="1">
    <location>
        <begin position="287"/>
        <end position="307"/>
    </location>
</feature>
<feature type="transmembrane region" description="Helical" evidence="1">
    <location>
        <begin position="321"/>
        <end position="341"/>
    </location>
</feature>
<feature type="transmembrane region" description="Helical" evidence="1">
    <location>
        <begin position="349"/>
        <end position="369"/>
    </location>
</feature>
<feature type="transmembrane region" description="Helical" evidence="1">
    <location>
        <begin position="420"/>
        <end position="440"/>
    </location>
</feature>
<feature type="glycosylation site" description="N-linked (GlcNAc...) asparagine" evidence="2">
    <location>
        <position position="252"/>
    </location>
</feature>
<comment type="function">
    <text evidence="6">Efflux pump that may provide the dual role of acetylaranotin export and self-protection by allowing the fungus to evade the harmful effect of its own acetylaranotin production (PubMed:23586797).</text>
</comment>
<comment type="subcellular location">
    <subcellularLocation>
        <location evidence="5">Cell membrane</location>
        <topology evidence="1">Multi-pass membrane protein</topology>
    </subcellularLocation>
</comment>
<comment type="disruption phenotype">
    <text evidence="3">Strongly reduces the production of acetylaranotin (PubMed:23586797).</text>
</comment>
<comment type="similarity">
    <text evidence="5">Belongs to the major facilitator superfamily.</text>
</comment>
<sequence length="449" mass="48068">MRRVTSVYVWLTVVVKDNTIIATAIPRITDQFKALEDVGWYGSSYLLVTCMFQLIFGKLYGYFPIKWVFLAAIIIFEIGSAVCGAAPTSDAFILEMVVSTYLPEPFDHVLSAGSFYINLPIGAVVIVVLLQFLHVPNTVPVEASSKTLFQHMDPLGVVTFLPAIVCLLLALQWGGTTFPWANGRIIALFVLAGVLLIAFLAIQRKRQDNAMVPPRIITMHPVAFSSLFMTLFAGAYFTIIYYLPIWFQAIKNASAVNSGIMCLPLMLSMVIFSFVAGGGVTATGNPVPFFYIATVLAAAGAGLMTTFEVHTGHPKWIGYQVLLGSGVGMGIQLPIIAVQAVLPAADIPVGTAILTFCQTFGGAIFVSVAQAVFANRLQTGLLRAVPGVSPGLVQEVGATNLDTVIDAQHMGAVKVVYNDALVSAWYLAVALFSVAVLGAVGMSTKRKSA</sequence>
<reference key="1">
    <citation type="submission" date="2005-09" db="EMBL/GenBank/DDBJ databases">
        <title>Annotation of the Aspergillus terreus NIH2624 genome.</title>
        <authorList>
            <person name="Birren B.W."/>
            <person name="Lander E.S."/>
            <person name="Galagan J.E."/>
            <person name="Nusbaum C."/>
            <person name="Devon K."/>
            <person name="Henn M."/>
            <person name="Ma L.-J."/>
            <person name="Jaffe D.B."/>
            <person name="Butler J."/>
            <person name="Alvarez P."/>
            <person name="Gnerre S."/>
            <person name="Grabherr M."/>
            <person name="Kleber M."/>
            <person name="Mauceli E.W."/>
            <person name="Brockman W."/>
            <person name="Rounsley S."/>
            <person name="Young S.K."/>
            <person name="LaButti K."/>
            <person name="Pushparaj V."/>
            <person name="DeCaprio D."/>
            <person name="Crawford M."/>
            <person name="Koehrsen M."/>
            <person name="Engels R."/>
            <person name="Montgomery P."/>
            <person name="Pearson M."/>
            <person name="Howarth C."/>
            <person name="Larson L."/>
            <person name="Luoma S."/>
            <person name="White J."/>
            <person name="Alvarado L."/>
            <person name="Kodira C.D."/>
            <person name="Zeng Q."/>
            <person name="Oleary S."/>
            <person name="Yandava C."/>
            <person name="Denning D.W."/>
            <person name="Nierman W.C."/>
            <person name="Milne T."/>
            <person name="Madden K."/>
        </authorList>
    </citation>
    <scope>NUCLEOTIDE SEQUENCE [LARGE SCALE GENOMIC DNA]</scope>
    <source>
        <strain>NIH 2624 / FGSC A1156</strain>
    </source>
</reference>
<reference key="2">
    <citation type="journal article" date="2013" name="J. Am. Chem. Soc.">
        <title>Biosynthetic pathway for the epipolythiodioxopiperazine acetylaranotin in Aspergillus terreus revealed by genome-based deletion analysis.</title>
        <authorList>
            <person name="Guo C.J."/>
            <person name="Yeh H.H."/>
            <person name="Chiang Y.M."/>
            <person name="Sanchez J.F."/>
            <person name="Chang S.L."/>
            <person name="Bruno K.S."/>
            <person name="Wang C.C."/>
        </authorList>
    </citation>
    <scope>FUNCTION</scope>
    <scope>DISRUPTION PHENOTYPE</scope>
</reference>
<evidence type="ECO:0000255" key="1"/>
<evidence type="ECO:0000255" key="2">
    <source>
        <dbReference type="PROSITE-ProRule" id="PRU00498"/>
    </source>
</evidence>
<evidence type="ECO:0000269" key="3">
    <source>
    </source>
</evidence>
<evidence type="ECO:0000303" key="4">
    <source>
    </source>
</evidence>
<evidence type="ECO:0000305" key="5"/>
<evidence type="ECO:0000305" key="6">
    <source>
    </source>
</evidence>